<keyword id="KW-0378">Hydrolase</keyword>
<keyword id="KW-0479">Metal-binding</keyword>
<keyword id="KW-1185">Reference proteome</keyword>
<keyword id="KW-0862">Zinc</keyword>
<protein>
    <recommendedName>
        <fullName evidence="1">1D-myo-inositol 2-acetamido-2-deoxy-alpha-D-glucopyranoside deacetylase</fullName>
        <shortName evidence="1">GlcNAc-Ins deacetylase</shortName>
        <ecNumber evidence="1">3.5.1.103</ecNumber>
    </recommendedName>
    <alternativeName>
        <fullName>N-acetyl-1-D-myo-inositol 2-amino-2-deoxy-alpha-D-glucopyranoside deacetylase</fullName>
    </alternativeName>
</protein>
<proteinExistence type="inferred from homology"/>
<organism>
    <name type="scientific">Streptomyces avermitilis (strain ATCC 31267 / DSM 46492 / JCM 5070 / NBRC 14893 / NCIMB 12804 / NRRL 8165 / MA-4680)</name>
    <dbReference type="NCBI Taxonomy" id="227882"/>
    <lineage>
        <taxon>Bacteria</taxon>
        <taxon>Bacillati</taxon>
        <taxon>Actinomycetota</taxon>
        <taxon>Actinomycetes</taxon>
        <taxon>Kitasatosporales</taxon>
        <taxon>Streptomycetaceae</taxon>
        <taxon>Streptomyces</taxon>
    </lineage>
</organism>
<comment type="function">
    <text evidence="1">Catalyzes the deacetylation of 1D-myo-inositol 2-acetamido-2-deoxy-alpha-D-glucopyranoside (GlcNAc-Ins) in the mycothiol biosynthesis pathway.</text>
</comment>
<comment type="catalytic activity">
    <reaction evidence="1">
        <text>1D-myo-inositol 2-acetamido-2-deoxy-alpha-D-glucopyranoside + H2O = 1D-myo-inositol 2-amino-2-deoxy-alpha-D-glucopyranoside + acetate</text>
        <dbReference type="Rhea" id="RHEA:26180"/>
        <dbReference type="ChEBI" id="CHEBI:15377"/>
        <dbReference type="ChEBI" id="CHEBI:30089"/>
        <dbReference type="ChEBI" id="CHEBI:52442"/>
        <dbReference type="ChEBI" id="CHEBI:58886"/>
        <dbReference type="EC" id="3.5.1.103"/>
    </reaction>
</comment>
<comment type="cofactor">
    <cofactor evidence="1">
        <name>Zn(2+)</name>
        <dbReference type="ChEBI" id="CHEBI:29105"/>
    </cofactor>
    <text evidence="1">Binds 1 zinc ion per subunit.</text>
</comment>
<comment type="similarity">
    <text evidence="1">Belongs to the MshB deacetylase family.</text>
</comment>
<dbReference type="EC" id="3.5.1.103" evidence="1"/>
<dbReference type="EMBL" id="BA000030">
    <property type="protein sequence ID" value="BAC70849.1"/>
    <property type="molecule type" value="Genomic_DNA"/>
</dbReference>
<dbReference type="RefSeq" id="WP_010984568.1">
    <property type="nucleotide sequence ID" value="NZ_JZJK01000090.1"/>
</dbReference>
<dbReference type="SMR" id="Q82IJ5"/>
<dbReference type="GeneID" id="41540214"/>
<dbReference type="KEGG" id="sma:SAVERM_3138"/>
<dbReference type="eggNOG" id="COG2120">
    <property type="taxonomic scope" value="Bacteria"/>
</dbReference>
<dbReference type="HOGENOM" id="CLU_049311_2_1_11"/>
<dbReference type="OrthoDB" id="158614at2"/>
<dbReference type="Proteomes" id="UP000000428">
    <property type="component" value="Chromosome"/>
</dbReference>
<dbReference type="GO" id="GO:0035595">
    <property type="term" value="F:N-acetylglucosaminylinositol deacetylase activity"/>
    <property type="evidence" value="ECO:0007669"/>
    <property type="project" value="UniProtKB-EC"/>
</dbReference>
<dbReference type="GO" id="GO:0008270">
    <property type="term" value="F:zinc ion binding"/>
    <property type="evidence" value="ECO:0007669"/>
    <property type="project" value="UniProtKB-UniRule"/>
</dbReference>
<dbReference type="GO" id="GO:0010125">
    <property type="term" value="P:mycothiol biosynthetic process"/>
    <property type="evidence" value="ECO:0007669"/>
    <property type="project" value="UniProtKB-UniRule"/>
</dbReference>
<dbReference type="Gene3D" id="3.40.50.10320">
    <property type="entry name" value="LmbE-like"/>
    <property type="match status" value="1"/>
</dbReference>
<dbReference type="HAMAP" id="MF_01696">
    <property type="entry name" value="MshB"/>
    <property type="match status" value="1"/>
</dbReference>
<dbReference type="InterPro" id="IPR003737">
    <property type="entry name" value="GlcNAc_PI_deacetylase-related"/>
</dbReference>
<dbReference type="InterPro" id="IPR024078">
    <property type="entry name" value="LmbE-like_dom_sf"/>
</dbReference>
<dbReference type="InterPro" id="IPR017810">
    <property type="entry name" value="Mycothiol_biosynthesis_MshB"/>
</dbReference>
<dbReference type="NCBIfam" id="TIGR03445">
    <property type="entry name" value="mycothiol_MshB"/>
    <property type="match status" value="1"/>
</dbReference>
<dbReference type="PANTHER" id="PTHR12993:SF26">
    <property type="entry name" value="1D-MYO-INOSITOL 2-ACETAMIDO-2-DEOXY-ALPHA-D-GLUCOPYRANOSIDE DEACETYLASE"/>
    <property type="match status" value="1"/>
</dbReference>
<dbReference type="PANTHER" id="PTHR12993">
    <property type="entry name" value="N-ACETYLGLUCOSAMINYL-PHOSPHATIDYLINOSITOL DE-N-ACETYLASE-RELATED"/>
    <property type="match status" value="1"/>
</dbReference>
<dbReference type="Pfam" id="PF02585">
    <property type="entry name" value="PIG-L"/>
    <property type="match status" value="1"/>
</dbReference>
<dbReference type="SUPFAM" id="SSF102588">
    <property type="entry name" value="LmbE-like"/>
    <property type="match status" value="1"/>
</dbReference>
<reference key="1">
    <citation type="journal article" date="2001" name="Proc. Natl. Acad. Sci. U.S.A.">
        <title>Genome sequence of an industrial microorganism Streptomyces avermitilis: deducing the ability of producing secondary metabolites.</title>
        <authorList>
            <person name="Omura S."/>
            <person name="Ikeda H."/>
            <person name="Ishikawa J."/>
            <person name="Hanamoto A."/>
            <person name="Takahashi C."/>
            <person name="Shinose M."/>
            <person name="Takahashi Y."/>
            <person name="Horikawa H."/>
            <person name="Nakazawa H."/>
            <person name="Osonoe T."/>
            <person name="Kikuchi H."/>
            <person name="Shiba T."/>
            <person name="Sakaki Y."/>
            <person name="Hattori M."/>
        </authorList>
    </citation>
    <scope>NUCLEOTIDE SEQUENCE [LARGE SCALE GENOMIC DNA]</scope>
    <source>
        <strain>ATCC 31267 / DSM 46492 / JCM 5070 / NBRC 14893 / NCIMB 12804 / NRRL 8165 / MA-4680</strain>
    </source>
</reference>
<reference key="2">
    <citation type="journal article" date="2003" name="Nat. Biotechnol.">
        <title>Complete genome sequence and comparative analysis of the industrial microorganism Streptomyces avermitilis.</title>
        <authorList>
            <person name="Ikeda H."/>
            <person name="Ishikawa J."/>
            <person name="Hanamoto A."/>
            <person name="Shinose M."/>
            <person name="Kikuchi H."/>
            <person name="Shiba T."/>
            <person name="Sakaki Y."/>
            <person name="Hattori M."/>
            <person name="Omura S."/>
        </authorList>
    </citation>
    <scope>NUCLEOTIDE SEQUENCE [LARGE SCALE GENOMIC DNA]</scope>
    <source>
        <strain>ATCC 31267 / DSM 46492 / JCM 5070 / NBRC 14893 / NCIMB 12804 / NRRL 8165 / MA-4680</strain>
    </source>
</reference>
<accession>Q82IJ5</accession>
<sequence>MKDLPDRRLLLVHAHPDDESINNGATMARYAAEGAQVTLVTCTLGEEGEVIPPALAHLTPDRDDALGPYRVGELAAAMKELGVTDHRFLGGPGRYRDSGMMGGEQNHRAGAFWAADLDEAAGHLVAVVREVRPQVLVTYDPDGGYGHPDHIQAHRVAVRAAELAADPAFRPELGTPWEIAKVYWNRVPRPVAEEGFARLRLALPGTRFAKSAAVDDVPGVVDESVITTEIDGTPFAAAKAAAMRAHATQVEVDGPWFALSNELAQPLFTTEYYELVRGERGSPRETDLFEGVAP</sequence>
<name>MSHB_STRAW</name>
<evidence type="ECO:0000255" key="1">
    <source>
        <dbReference type="HAMAP-Rule" id="MF_01696"/>
    </source>
</evidence>
<feature type="chain" id="PRO_0000400224" description="1D-myo-inositol 2-acetamido-2-deoxy-alpha-D-glucopyranoside deacetylase">
    <location>
        <begin position="1"/>
        <end position="294"/>
    </location>
</feature>
<feature type="binding site" evidence="1">
    <location>
        <position position="15"/>
    </location>
    <ligand>
        <name>Zn(2+)</name>
        <dbReference type="ChEBI" id="CHEBI:29105"/>
    </ligand>
</feature>
<feature type="binding site" evidence="1">
    <location>
        <position position="18"/>
    </location>
    <ligand>
        <name>Zn(2+)</name>
        <dbReference type="ChEBI" id="CHEBI:29105"/>
    </ligand>
</feature>
<feature type="binding site" evidence="1">
    <location>
        <position position="150"/>
    </location>
    <ligand>
        <name>Zn(2+)</name>
        <dbReference type="ChEBI" id="CHEBI:29105"/>
    </ligand>
</feature>
<gene>
    <name evidence="1" type="primary">mshB</name>
    <name type="ordered locus">SAV_3138</name>
</gene>